<gene>
    <name type="ORF">GA14038</name>
</gene>
<reference key="1">
    <citation type="journal article" date="2005" name="Genome Res.">
        <title>Comparative genome sequencing of Drosophila pseudoobscura: chromosomal, gene, and cis-element evolution.</title>
        <authorList>
            <person name="Richards S."/>
            <person name="Liu Y."/>
            <person name="Bettencourt B.R."/>
            <person name="Hradecky P."/>
            <person name="Letovsky S."/>
            <person name="Nielsen R."/>
            <person name="Thornton K."/>
            <person name="Hubisz M.J."/>
            <person name="Chen R."/>
            <person name="Meisel R.P."/>
            <person name="Couronne O."/>
            <person name="Hua S."/>
            <person name="Smith M.A."/>
            <person name="Zhang P."/>
            <person name="Liu J."/>
            <person name="Bussemaker H.J."/>
            <person name="van Batenburg M.F."/>
            <person name="Howells S.L."/>
            <person name="Scherer S.E."/>
            <person name="Sodergren E."/>
            <person name="Matthews B.B."/>
            <person name="Crosby M.A."/>
            <person name="Schroeder A.J."/>
            <person name="Ortiz-Barrientos D."/>
            <person name="Rives C.M."/>
            <person name="Metzker M.L."/>
            <person name="Muzny D.M."/>
            <person name="Scott G."/>
            <person name="Steffen D."/>
            <person name="Wheeler D.A."/>
            <person name="Worley K.C."/>
            <person name="Havlak P."/>
            <person name="Durbin K.J."/>
            <person name="Egan A."/>
            <person name="Gill R."/>
            <person name="Hume J."/>
            <person name="Morgan M.B."/>
            <person name="Miner G."/>
            <person name="Hamilton C."/>
            <person name="Huang Y."/>
            <person name="Waldron L."/>
            <person name="Verduzco D."/>
            <person name="Clerc-Blankenburg K.P."/>
            <person name="Dubchak I."/>
            <person name="Noor M.A.F."/>
            <person name="Anderson W."/>
            <person name="White K.P."/>
            <person name="Clark A.G."/>
            <person name="Schaeffer S.W."/>
            <person name="Gelbart W.M."/>
            <person name="Weinstock G.M."/>
            <person name="Gibbs R.A."/>
        </authorList>
    </citation>
    <scope>NUCLEOTIDE SEQUENCE [LARGE SCALE GENOMIC DNA]</scope>
    <source>
        <strain>MV2-25 / Tucson 14011-0121.94</strain>
    </source>
</reference>
<dbReference type="EC" id="3.6.-.-" evidence="1"/>
<dbReference type="EMBL" id="CM000071">
    <property type="protein sequence ID" value="EAL25973.1"/>
    <property type="molecule type" value="Genomic_DNA"/>
</dbReference>
<dbReference type="SMR" id="Q28YJ2"/>
<dbReference type="FunCoup" id="Q28YJ2">
    <property type="interactions" value="2098"/>
</dbReference>
<dbReference type="STRING" id="46245.Q28YJ2"/>
<dbReference type="EnsemblMetazoa" id="FBtr0279836">
    <property type="protein sequence ID" value="FBpp0278274"/>
    <property type="gene ID" value="FBgn0074069"/>
</dbReference>
<dbReference type="KEGG" id="dpo:4804910"/>
<dbReference type="eggNOG" id="KOG2825">
    <property type="taxonomic scope" value="Eukaryota"/>
</dbReference>
<dbReference type="HOGENOM" id="CLU_040761_0_0_1"/>
<dbReference type="InParanoid" id="Q28YJ2"/>
<dbReference type="OMA" id="MDAPYEF"/>
<dbReference type="PhylomeDB" id="Q28YJ2"/>
<dbReference type="Proteomes" id="UP000001819">
    <property type="component" value="Chromosome 3"/>
</dbReference>
<dbReference type="Bgee" id="FBgn0074069">
    <property type="expression patterns" value="Expressed in insect adult head and 2 other cell types or tissues"/>
</dbReference>
<dbReference type="ExpressionAtlas" id="Q28YJ2">
    <property type="expression patterns" value="baseline"/>
</dbReference>
<dbReference type="GO" id="GO:0043529">
    <property type="term" value="C:GET complex"/>
    <property type="evidence" value="ECO:0007669"/>
    <property type="project" value="TreeGrafter"/>
</dbReference>
<dbReference type="GO" id="GO:0005524">
    <property type="term" value="F:ATP binding"/>
    <property type="evidence" value="ECO:0007669"/>
    <property type="project" value="UniProtKB-UniRule"/>
</dbReference>
<dbReference type="GO" id="GO:0016887">
    <property type="term" value="F:ATP hydrolysis activity"/>
    <property type="evidence" value="ECO:0007669"/>
    <property type="project" value="InterPro"/>
</dbReference>
<dbReference type="GO" id="GO:0046872">
    <property type="term" value="F:metal ion binding"/>
    <property type="evidence" value="ECO:0007669"/>
    <property type="project" value="UniProtKB-KW"/>
</dbReference>
<dbReference type="GO" id="GO:0071816">
    <property type="term" value="P:tail-anchored membrane protein insertion into ER membrane"/>
    <property type="evidence" value="ECO:0007669"/>
    <property type="project" value="TreeGrafter"/>
</dbReference>
<dbReference type="CDD" id="cd02035">
    <property type="entry name" value="ArsA"/>
    <property type="match status" value="1"/>
</dbReference>
<dbReference type="FunFam" id="3.40.50.300:FF:000235">
    <property type="entry name" value="ATPase ASNA1"/>
    <property type="match status" value="1"/>
</dbReference>
<dbReference type="Gene3D" id="3.40.50.300">
    <property type="entry name" value="P-loop containing nucleotide triphosphate hydrolases"/>
    <property type="match status" value="1"/>
</dbReference>
<dbReference type="HAMAP" id="MF_03112">
    <property type="entry name" value="Asna1_Get3"/>
    <property type="match status" value="1"/>
</dbReference>
<dbReference type="InterPro" id="IPR025723">
    <property type="entry name" value="Anion-transp_ATPase-like_dom"/>
</dbReference>
<dbReference type="InterPro" id="IPR016300">
    <property type="entry name" value="ATPase_ArsA/GET3"/>
</dbReference>
<dbReference type="InterPro" id="IPR027542">
    <property type="entry name" value="ATPase_ArsA/GET3_euk"/>
</dbReference>
<dbReference type="InterPro" id="IPR027417">
    <property type="entry name" value="P-loop_NTPase"/>
</dbReference>
<dbReference type="NCBIfam" id="TIGR00345">
    <property type="entry name" value="GET3_arsA_TRC40"/>
    <property type="match status" value="1"/>
</dbReference>
<dbReference type="PANTHER" id="PTHR10803">
    <property type="entry name" value="ARSENICAL PUMP-DRIVING ATPASE ARSENITE-TRANSLOCATING ATPASE"/>
    <property type="match status" value="1"/>
</dbReference>
<dbReference type="PANTHER" id="PTHR10803:SF3">
    <property type="entry name" value="ATPASE GET3"/>
    <property type="match status" value="1"/>
</dbReference>
<dbReference type="Pfam" id="PF02374">
    <property type="entry name" value="ArsA_ATPase"/>
    <property type="match status" value="1"/>
</dbReference>
<dbReference type="SUPFAM" id="SSF52540">
    <property type="entry name" value="P-loop containing nucleoside triphosphate hydrolases"/>
    <property type="match status" value="1"/>
</dbReference>
<sequence>MVDNLEPLPASLQNLVEQDSLKWIFVGGKGGVGKTTCSSSLAVQLAKVRESVLIISTDPAHNISDAFDQKFTKVPTKVNGFDNLFAMEIDPNAGLNELPEEYFEGENEALRVSKGVMQEMINALPGIDEAMSYAEVMKLVKGMNFSVVVFDTAPTGHTLRLIAFPQVVEKGLGKLLRLKMKVAPLLTQFASMLGMADVNVDTLSQKLDDMLRVITQVNEQFKNPDQTTFVCVCIAEFFSLYETERLIQELTKCGIDVHNIIVNQLLFLNNSHSACKMCASRYKIQEKYLDQIADLYEDFHVTKLPLLEKEVRGPDSIKAFSENLMTPYDPKAKPKE</sequence>
<comment type="function">
    <text evidence="1">ATPase required for the post-translational delivery of tail-anchored (TA) proteins to the endoplasmic reticulum. Recognizes and selectively binds the transmembrane domain of TA proteins in the cytosol. This complex then targets to the endoplasmic reticulum by membrane-bound receptors, where the tail-anchored protein is released for insertion. This process is regulated by ATP binding and hydrolysis. ATP binding drives the homodimer towards the closed dimer state, facilitating recognition of newly synthesized TA membrane proteins. ATP hydrolysis is required for insertion. Subsequently, the homodimer reverts towards the open dimer state, lowering its affinity for the membrane-bound receptor, and returning it to the cytosol to initiate a new round of targeting.</text>
</comment>
<comment type="subunit">
    <text evidence="1">Homodimer.</text>
</comment>
<comment type="subcellular location">
    <subcellularLocation>
        <location evidence="1">Cytoplasm</location>
    </subcellularLocation>
    <subcellularLocation>
        <location evidence="1">Endoplasmic reticulum</location>
    </subcellularLocation>
</comment>
<comment type="similarity">
    <text evidence="1">Belongs to the arsA ATPase family.</text>
</comment>
<proteinExistence type="inferred from homology"/>
<feature type="chain" id="PRO_0000388154" description="ATPase ASNA1 homolog">
    <location>
        <begin position="1"/>
        <end position="336"/>
    </location>
</feature>
<feature type="active site" evidence="1">
    <location>
        <position position="58"/>
    </location>
</feature>
<feature type="binding site" evidence="1">
    <location>
        <begin position="29"/>
        <end position="36"/>
    </location>
    <ligand>
        <name>ATP</name>
        <dbReference type="ChEBI" id="CHEBI:30616"/>
    </ligand>
</feature>
<feature type="binding site" evidence="1">
    <location>
        <position position="236"/>
    </location>
    <ligand>
        <name>ATP</name>
        <dbReference type="ChEBI" id="CHEBI:30616"/>
    </ligand>
</feature>
<feature type="binding site" evidence="1">
    <location>
        <position position="263"/>
    </location>
    <ligand>
        <name>ATP</name>
        <dbReference type="ChEBI" id="CHEBI:30616"/>
    </ligand>
</feature>
<feature type="binding site" evidence="1">
    <location>
        <position position="275"/>
    </location>
    <ligand>
        <name>Zn(2+)</name>
        <dbReference type="ChEBI" id="CHEBI:29105"/>
        <note>ligand shared between dimeric partners</note>
    </ligand>
</feature>
<feature type="binding site" evidence="1">
    <location>
        <position position="278"/>
    </location>
    <ligand>
        <name>Zn(2+)</name>
        <dbReference type="ChEBI" id="CHEBI:29105"/>
        <note>ligand shared between dimeric partners</note>
    </ligand>
</feature>
<accession>Q28YJ2</accession>
<organism>
    <name type="scientific">Drosophila pseudoobscura pseudoobscura</name>
    <name type="common">Fruit fly</name>
    <dbReference type="NCBI Taxonomy" id="46245"/>
    <lineage>
        <taxon>Eukaryota</taxon>
        <taxon>Metazoa</taxon>
        <taxon>Ecdysozoa</taxon>
        <taxon>Arthropoda</taxon>
        <taxon>Hexapoda</taxon>
        <taxon>Insecta</taxon>
        <taxon>Pterygota</taxon>
        <taxon>Neoptera</taxon>
        <taxon>Endopterygota</taxon>
        <taxon>Diptera</taxon>
        <taxon>Brachycera</taxon>
        <taxon>Muscomorpha</taxon>
        <taxon>Ephydroidea</taxon>
        <taxon>Drosophilidae</taxon>
        <taxon>Drosophila</taxon>
        <taxon>Sophophora</taxon>
    </lineage>
</organism>
<name>ASNA_DROPS</name>
<protein>
    <recommendedName>
        <fullName evidence="1">ATPase ASNA1 homolog</fullName>
        <ecNumber evidence="1">3.6.-.-</ecNumber>
    </recommendedName>
    <alternativeName>
        <fullName evidence="1">Arsenical pump-driving ATPase homolog</fullName>
    </alternativeName>
    <alternativeName>
        <fullName evidence="1">Arsenite-stimulated ATPase</fullName>
    </alternativeName>
</protein>
<keyword id="KW-0067">ATP-binding</keyword>
<keyword id="KW-0963">Cytoplasm</keyword>
<keyword id="KW-0256">Endoplasmic reticulum</keyword>
<keyword id="KW-0378">Hydrolase</keyword>
<keyword id="KW-0479">Metal-binding</keyword>
<keyword id="KW-0547">Nucleotide-binding</keyword>
<keyword id="KW-1185">Reference proteome</keyword>
<keyword id="KW-0813">Transport</keyword>
<keyword id="KW-0862">Zinc</keyword>
<evidence type="ECO:0000255" key="1">
    <source>
        <dbReference type="HAMAP-Rule" id="MF_03112"/>
    </source>
</evidence>